<gene>
    <name type="ordered locus">PMI1604</name>
</gene>
<keyword id="KW-1185">Reference proteome</keyword>
<feature type="chain" id="PRO_1000127052" description="UPF0181 protein PMI1604">
    <location>
        <begin position="1"/>
        <end position="60"/>
    </location>
</feature>
<evidence type="ECO:0000255" key="1">
    <source>
        <dbReference type="HAMAP-Rule" id="MF_00507"/>
    </source>
</evidence>
<comment type="similarity">
    <text evidence="1">Belongs to the UPF0181 family.</text>
</comment>
<name>Y1604_PROMH</name>
<dbReference type="EMBL" id="AM942759">
    <property type="protein sequence ID" value="CAR43351.1"/>
    <property type="molecule type" value="Genomic_DNA"/>
</dbReference>
<dbReference type="RefSeq" id="WP_004243469.1">
    <property type="nucleotide sequence ID" value="NC_010554.1"/>
</dbReference>
<dbReference type="SMR" id="B4EYB8"/>
<dbReference type="EnsemblBacteria" id="CAR43351">
    <property type="protein sequence ID" value="CAR43351"/>
    <property type="gene ID" value="PMI1604"/>
</dbReference>
<dbReference type="GeneID" id="6800776"/>
<dbReference type="KEGG" id="pmr:PMI1604"/>
<dbReference type="eggNOG" id="COG3140">
    <property type="taxonomic scope" value="Bacteria"/>
</dbReference>
<dbReference type="HOGENOM" id="CLU_185263_0_0_6"/>
<dbReference type="Proteomes" id="UP000008319">
    <property type="component" value="Chromosome"/>
</dbReference>
<dbReference type="HAMAP" id="MF_00507">
    <property type="entry name" value="UPF0181"/>
    <property type="match status" value="1"/>
</dbReference>
<dbReference type="InterPro" id="IPR005371">
    <property type="entry name" value="UPF0181"/>
</dbReference>
<dbReference type="NCBIfam" id="NF003476">
    <property type="entry name" value="PRK05114.1"/>
    <property type="match status" value="1"/>
</dbReference>
<dbReference type="Pfam" id="PF03701">
    <property type="entry name" value="UPF0181"/>
    <property type="match status" value="1"/>
</dbReference>
<accession>B4EYB8</accession>
<reference key="1">
    <citation type="journal article" date="2008" name="J. Bacteriol.">
        <title>Complete genome sequence of uropathogenic Proteus mirabilis, a master of both adherence and motility.</title>
        <authorList>
            <person name="Pearson M.M."/>
            <person name="Sebaihia M."/>
            <person name="Churcher C."/>
            <person name="Quail M.A."/>
            <person name="Seshasayee A.S."/>
            <person name="Luscombe N.M."/>
            <person name="Abdellah Z."/>
            <person name="Arrosmith C."/>
            <person name="Atkin B."/>
            <person name="Chillingworth T."/>
            <person name="Hauser H."/>
            <person name="Jagels K."/>
            <person name="Moule S."/>
            <person name="Mungall K."/>
            <person name="Norbertczak H."/>
            <person name="Rabbinowitsch E."/>
            <person name="Walker D."/>
            <person name="Whithead S."/>
            <person name="Thomson N.R."/>
            <person name="Rather P.N."/>
            <person name="Parkhill J."/>
            <person name="Mobley H.L.T."/>
        </authorList>
    </citation>
    <scope>NUCLEOTIDE SEQUENCE [LARGE SCALE GENOMIC DNA]</scope>
    <source>
        <strain>HI4320</strain>
    </source>
</reference>
<sequence>MFLGMPTLTHEEQQKAVEKIQHLMSEGMSSGEAIQLVAQELREKHTTRESVSIVFDDDND</sequence>
<organism>
    <name type="scientific">Proteus mirabilis (strain HI4320)</name>
    <dbReference type="NCBI Taxonomy" id="529507"/>
    <lineage>
        <taxon>Bacteria</taxon>
        <taxon>Pseudomonadati</taxon>
        <taxon>Pseudomonadota</taxon>
        <taxon>Gammaproteobacteria</taxon>
        <taxon>Enterobacterales</taxon>
        <taxon>Morganellaceae</taxon>
        <taxon>Proteus</taxon>
    </lineage>
</organism>
<protein>
    <recommendedName>
        <fullName evidence="1">UPF0181 protein PMI1604</fullName>
    </recommendedName>
</protein>
<proteinExistence type="inferred from homology"/>